<accession>Q9ESG2</accession>
<accession>Q3TVG5</accession>
<evidence type="ECO:0000250" key="1"/>
<evidence type="ECO:0000250" key="2">
    <source>
        <dbReference type="UniProtKB" id="Q4KLL5"/>
    </source>
</evidence>
<evidence type="ECO:0000250" key="3">
    <source>
        <dbReference type="UniProtKB" id="Q96C74"/>
    </source>
</evidence>
<evidence type="ECO:0000250" key="4">
    <source>
        <dbReference type="UniProtKB" id="Q9BZX4"/>
    </source>
</evidence>
<evidence type="ECO:0000269" key="5">
    <source>
    </source>
</evidence>
<evidence type="ECO:0000269" key="6">
    <source>
    </source>
</evidence>
<evidence type="ECO:0000269" key="7">
    <source>
    </source>
</evidence>
<evidence type="ECO:0000269" key="8">
    <source>
    </source>
</evidence>
<evidence type="ECO:0000269" key="9">
    <source>
    </source>
</evidence>
<evidence type="ECO:0000305" key="10"/>
<comment type="function">
    <text evidence="7">Important for male fertility. With ROPN1L, involved in fibrous sheath integrity and sperm motility, plays a role in PKA-dependent signaling processes required for spermatozoa capacitation.</text>
</comment>
<comment type="subunit">
    <text evidence="3 4 5 8 9">Homodimer. Interacts with AKAP3 (By similarity). May interact with SPA17 (By similarity). Interacts with RHPN1 (PubMed:10591629). Interacts with FSCB; the interaction increases upon spermatozoa capacitation conditions (PubMed:27398160). Interacts with CFAP61 (PubMed:34792097).</text>
</comment>
<comment type="subcellular location">
    <subcellularLocation>
        <location evidence="6 7">Cell projection</location>
        <location evidence="6 7">Cilium</location>
        <location evidence="6 7">Flagellum</location>
    </subcellularLocation>
    <text>In the sperm tail, found in the principal piece and in the cytoplasmic droplet located at the distal end of the midpiece. Inner surface of the fibrous sheath.</text>
</comment>
<comment type="tissue specificity">
    <text evidence="5 7">Testis-specific. Present in the most inner parts of seminiferous tubules (at protein level).</text>
</comment>
<comment type="developmental stage">
    <text evidence="5 7">Expression in testis starts at P21, and increases to reach a plateau at P27 (PubMed:10591629). Expressed in the flagella of sperm at all stages of development in the testis and epididymis (PubMed:23303679).</text>
</comment>
<comment type="domain">
    <text evidence="1">The RIIa domain mediates interaction with AKAP3.</text>
</comment>
<comment type="PTM">
    <text evidence="8">Sumoylated, sumoylation decreases upon spermatozoa capacitation conditions.</text>
</comment>
<comment type="disruption phenotype">
    <text evidence="7">Mutant mice are subfertile with normal testicular morphology and spermatogenesis but moderately impaired motility and increased levels of ROPN1L (PubMed:23303679). Double knockout animals for ROPN1 and ROPN1L are infertile with normal testicular morphology and spermatogenesis but defects in sperm morphology, thinning and shredding of the principal piece. Sperm is immotile (PubMed:23303679).</text>
</comment>
<comment type="miscellaneous">
    <text>'Ropporin' comes from the Japanese word 'oppo' which means 'tail'.</text>
</comment>
<comment type="similarity">
    <text evidence="10">Belongs to the ropporin family.</text>
</comment>
<reference key="1">
    <citation type="journal article" date="2000" name="J. Cell Sci.">
        <title>Ropporin, a sperm-specific binding protein of rhophilin, that is localized in the fibrous sheath of sperm flagella.</title>
        <authorList>
            <person name="Fujita A."/>
            <person name="Nakamura K."/>
            <person name="Kato T."/>
            <person name="Watanabe N."/>
            <person name="Ishizaki T."/>
            <person name="Kimura K."/>
            <person name="Mizoguchi A."/>
            <person name="Narumiya S."/>
        </authorList>
    </citation>
    <scope>NUCLEOTIDE SEQUENCE [MRNA]</scope>
    <scope>SUBUNIT</scope>
    <scope>INTERACTION WITH RHPN1</scope>
    <scope>TISSUE SPECIFICITY</scope>
    <scope>DEVELOPMENTAL STAGE</scope>
    <source>
        <strain>BALB/cJ</strain>
        <tissue>Testis</tissue>
    </source>
</reference>
<reference key="2">
    <citation type="journal article" date="2004" name="Genome Res.">
        <title>The status, quality, and expansion of the NIH full-length cDNA project: the Mammalian Gene Collection (MGC).</title>
        <authorList>
            <consortium name="The MGC Project Team"/>
        </authorList>
    </citation>
    <scope>NUCLEOTIDE SEQUENCE [LARGE SCALE MRNA]</scope>
    <source>
        <tissue>Testis</tissue>
    </source>
</reference>
<reference key="3">
    <citation type="journal article" date="2005" name="Science">
        <title>The transcriptional landscape of the mammalian genome.</title>
        <authorList>
            <person name="Carninci P."/>
            <person name="Kasukawa T."/>
            <person name="Katayama S."/>
            <person name="Gough J."/>
            <person name="Frith M.C."/>
            <person name="Maeda N."/>
            <person name="Oyama R."/>
            <person name="Ravasi T."/>
            <person name="Lenhard B."/>
            <person name="Wells C."/>
            <person name="Kodzius R."/>
            <person name="Shimokawa K."/>
            <person name="Bajic V.B."/>
            <person name="Brenner S.E."/>
            <person name="Batalov S."/>
            <person name="Forrest A.R."/>
            <person name="Zavolan M."/>
            <person name="Davis M.J."/>
            <person name="Wilming L.G."/>
            <person name="Aidinis V."/>
            <person name="Allen J.E."/>
            <person name="Ambesi-Impiombato A."/>
            <person name="Apweiler R."/>
            <person name="Aturaliya R.N."/>
            <person name="Bailey T.L."/>
            <person name="Bansal M."/>
            <person name="Baxter L."/>
            <person name="Beisel K.W."/>
            <person name="Bersano T."/>
            <person name="Bono H."/>
            <person name="Chalk A.M."/>
            <person name="Chiu K.P."/>
            <person name="Choudhary V."/>
            <person name="Christoffels A."/>
            <person name="Clutterbuck D.R."/>
            <person name="Crowe M.L."/>
            <person name="Dalla E."/>
            <person name="Dalrymple B.P."/>
            <person name="de Bono B."/>
            <person name="Della Gatta G."/>
            <person name="di Bernardo D."/>
            <person name="Down T."/>
            <person name="Engstrom P."/>
            <person name="Fagiolini M."/>
            <person name="Faulkner G."/>
            <person name="Fletcher C.F."/>
            <person name="Fukushima T."/>
            <person name="Furuno M."/>
            <person name="Futaki S."/>
            <person name="Gariboldi M."/>
            <person name="Georgii-Hemming P."/>
            <person name="Gingeras T.R."/>
            <person name="Gojobori T."/>
            <person name="Green R.E."/>
            <person name="Gustincich S."/>
            <person name="Harbers M."/>
            <person name="Hayashi Y."/>
            <person name="Hensch T.K."/>
            <person name="Hirokawa N."/>
            <person name="Hill D."/>
            <person name="Huminiecki L."/>
            <person name="Iacono M."/>
            <person name="Ikeo K."/>
            <person name="Iwama A."/>
            <person name="Ishikawa T."/>
            <person name="Jakt M."/>
            <person name="Kanapin A."/>
            <person name="Katoh M."/>
            <person name="Kawasawa Y."/>
            <person name="Kelso J."/>
            <person name="Kitamura H."/>
            <person name="Kitano H."/>
            <person name="Kollias G."/>
            <person name="Krishnan S.P."/>
            <person name="Kruger A."/>
            <person name="Kummerfeld S.K."/>
            <person name="Kurochkin I.V."/>
            <person name="Lareau L.F."/>
            <person name="Lazarevic D."/>
            <person name="Lipovich L."/>
            <person name="Liu J."/>
            <person name="Liuni S."/>
            <person name="McWilliam S."/>
            <person name="Madan Babu M."/>
            <person name="Madera M."/>
            <person name="Marchionni L."/>
            <person name="Matsuda H."/>
            <person name="Matsuzawa S."/>
            <person name="Miki H."/>
            <person name="Mignone F."/>
            <person name="Miyake S."/>
            <person name="Morris K."/>
            <person name="Mottagui-Tabar S."/>
            <person name="Mulder N."/>
            <person name="Nakano N."/>
            <person name="Nakauchi H."/>
            <person name="Ng P."/>
            <person name="Nilsson R."/>
            <person name="Nishiguchi S."/>
            <person name="Nishikawa S."/>
            <person name="Nori F."/>
            <person name="Ohara O."/>
            <person name="Okazaki Y."/>
            <person name="Orlando V."/>
            <person name="Pang K.C."/>
            <person name="Pavan W.J."/>
            <person name="Pavesi G."/>
            <person name="Pesole G."/>
            <person name="Petrovsky N."/>
            <person name="Piazza S."/>
            <person name="Reed J."/>
            <person name="Reid J.F."/>
            <person name="Ring B.Z."/>
            <person name="Ringwald M."/>
            <person name="Rost B."/>
            <person name="Ruan Y."/>
            <person name="Salzberg S.L."/>
            <person name="Sandelin A."/>
            <person name="Schneider C."/>
            <person name="Schoenbach C."/>
            <person name="Sekiguchi K."/>
            <person name="Semple C.A."/>
            <person name="Seno S."/>
            <person name="Sessa L."/>
            <person name="Sheng Y."/>
            <person name="Shibata Y."/>
            <person name="Shimada H."/>
            <person name="Shimada K."/>
            <person name="Silva D."/>
            <person name="Sinclair B."/>
            <person name="Sperling S."/>
            <person name="Stupka E."/>
            <person name="Sugiura K."/>
            <person name="Sultana R."/>
            <person name="Takenaka Y."/>
            <person name="Taki K."/>
            <person name="Tammoja K."/>
            <person name="Tan S.L."/>
            <person name="Tang S."/>
            <person name="Taylor M.S."/>
            <person name="Tegner J."/>
            <person name="Teichmann S.A."/>
            <person name="Ueda H.R."/>
            <person name="van Nimwegen E."/>
            <person name="Verardo R."/>
            <person name="Wei C.L."/>
            <person name="Yagi K."/>
            <person name="Yamanishi H."/>
            <person name="Zabarovsky E."/>
            <person name="Zhu S."/>
            <person name="Zimmer A."/>
            <person name="Hide W."/>
            <person name="Bult C."/>
            <person name="Grimmond S.M."/>
            <person name="Teasdale R.D."/>
            <person name="Liu E.T."/>
            <person name="Brusic V."/>
            <person name="Quackenbush J."/>
            <person name="Wahlestedt C."/>
            <person name="Mattick J.S."/>
            <person name="Hume D.A."/>
            <person name="Kai C."/>
            <person name="Sasaki D."/>
            <person name="Tomaru Y."/>
            <person name="Fukuda S."/>
            <person name="Kanamori-Katayama M."/>
            <person name="Suzuki M."/>
            <person name="Aoki J."/>
            <person name="Arakawa T."/>
            <person name="Iida J."/>
            <person name="Imamura K."/>
            <person name="Itoh M."/>
            <person name="Kato T."/>
            <person name="Kawaji H."/>
            <person name="Kawagashira N."/>
            <person name="Kawashima T."/>
            <person name="Kojima M."/>
            <person name="Kondo S."/>
            <person name="Konno H."/>
            <person name="Nakano K."/>
            <person name="Ninomiya N."/>
            <person name="Nishio T."/>
            <person name="Okada M."/>
            <person name="Plessy C."/>
            <person name="Shibata K."/>
            <person name="Shiraki T."/>
            <person name="Suzuki S."/>
            <person name="Tagami M."/>
            <person name="Waki K."/>
            <person name="Watahiki A."/>
            <person name="Okamura-Oho Y."/>
            <person name="Suzuki H."/>
            <person name="Kawai J."/>
            <person name="Hayashizaki Y."/>
        </authorList>
    </citation>
    <scope>NUCLEOTIDE SEQUENCE [LARGE SCALE MRNA] OF 62-212</scope>
    <source>
        <strain>C57BL/6J</strain>
        <tissue>Testis</tissue>
    </source>
</reference>
<reference key="4">
    <citation type="journal article" date="2001" name="J. Biol. Chem.">
        <title>Identification of sperm-specific proteins that interact with A-kinase anchoring proteins in a manner similar to the type II regulatory subunit of PKA.</title>
        <authorList>
            <person name="Carr D.W."/>
            <person name="Fujita A."/>
            <person name="Stentz C.L."/>
            <person name="Liberty G.A."/>
            <person name="Olson G.E."/>
            <person name="Narumiya S."/>
        </authorList>
    </citation>
    <scope>SUBCELLULAR LOCATION</scope>
</reference>
<reference key="5">
    <citation type="journal article" date="2010" name="Cell">
        <title>A tissue-specific atlas of mouse protein phosphorylation and expression.</title>
        <authorList>
            <person name="Huttlin E.L."/>
            <person name="Jedrychowski M.P."/>
            <person name="Elias J.E."/>
            <person name="Goswami T."/>
            <person name="Rad R."/>
            <person name="Beausoleil S.A."/>
            <person name="Villen J."/>
            <person name="Haas W."/>
            <person name="Sowa M.E."/>
            <person name="Gygi S.P."/>
        </authorList>
    </citation>
    <scope>IDENTIFICATION BY MASS SPECTROMETRY [LARGE SCALE ANALYSIS]</scope>
    <source>
        <tissue>Testis</tissue>
    </source>
</reference>
<reference key="6">
    <citation type="journal article" date="2013" name="Biol. Reprod.">
        <title>Loss of R2D2 proteins ROPN1 and ROPN1L causes defects in murine sperm motility, phosphorylation, and fibrous sheath integrity.</title>
        <authorList>
            <person name="Fiedler S.E."/>
            <person name="Dudiki T."/>
            <person name="Vijayaraghavan S."/>
            <person name="Carr D.W."/>
        </authorList>
    </citation>
    <scope>FUNCTION</scope>
    <scope>DISRUPTION PHENOTYPE</scope>
    <scope>TISSUE SPECIFICITY</scope>
    <scope>SUBCELLULAR LOCATION</scope>
    <scope>DEVELOPMENTAL STAGE</scope>
</reference>
<reference key="7">
    <citation type="journal article" date="2016" name="Am. J. Transl. Res.">
        <title>FSCB phosphorylation regulates mouse spermatozoa capacitation through suppressing SUMOylation of ROPN1/ROPN1L.</title>
        <authorList>
            <person name="Zhang X."/>
            <person name="Chen M."/>
            <person name="Yu R."/>
            <person name="Liu B."/>
            <person name="Tian Z."/>
            <person name="Liu S."/>
        </authorList>
    </citation>
    <scope>SUMOYLATION</scope>
    <scope>INTERACTION WITH FSCB</scope>
</reference>
<reference key="8">
    <citation type="journal article" date="2021" name="Development">
        <title>CFAP61 is required for sperm flagellum formation and male fertility in human and mouse.</title>
        <authorList>
            <person name="Liu S."/>
            <person name="Zhang J."/>
            <person name="Kherraf Z.E."/>
            <person name="Sun S."/>
            <person name="Zhang X."/>
            <person name="Cazin C."/>
            <person name="Coutton C."/>
            <person name="Zouari R."/>
            <person name="Zhao S."/>
            <person name="Hu F."/>
            <person name="Fourati Ben Mustapha S."/>
            <person name="Arnoult C."/>
            <person name="Ray P.F."/>
            <person name="Liu M."/>
        </authorList>
    </citation>
    <scope>INTERACTION WITH CFAP61</scope>
</reference>
<keyword id="KW-0966">Cell projection</keyword>
<keyword id="KW-0969">Cilium</keyword>
<keyword id="KW-0282">Flagellum</keyword>
<keyword id="KW-0597">Phosphoprotein</keyword>
<keyword id="KW-1185">Reference proteome</keyword>
<keyword id="KW-0832">Ubl conjugation</keyword>
<feature type="chain" id="PRO_0000307395" description="Ropporin-1">
    <location>
        <begin position="1"/>
        <end position="212"/>
    </location>
</feature>
<feature type="domain" description="RIIa">
    <location>
        <begin position="12"/>
        <end position="43"/>
    </location>
</feature>
<feature type="region of interest" description="Interaction with RHPN1" evidence="5">
    <location>
        <begin position="209"/>
        <end position="212"/>
    </location>
</feature>
<feature type="modified residue" description="Phosphoserine" evidence="2">
    <location>
        <position position="56"/>
    </location>
</feature>
<dbReference type="EMBL" id="AF178531">
    <property type="protein sequence ID" value="AAG09309.1"/>
    <property type="molecule type" value="mRNA"/>
</dbReference>
<dbReference type="EMBL" id="BC049544">
    <property type="protein sequence ID" value="AAH49544.1"/>
    <property type="molecule type" value="mRNA"/>
</dbReference>
<dbReference type="EMBL" id="AK160142">
    <property type="protein sequence ID" value="BAE35653.1"/>
    <property type="molecule type" value="mRNA"/>
</dbReference>
<dbReference type="CCDS" id="CCDS28137.1"/>
<dbReference type="RefSeq" id="NP_001405884.1">
    <property type="nucleotide sequence ID" value="NM_001418955.1"/>
</dbReference>
<dbReference type="RefSeq" id="NP_109669.1">
    <property type="nucleotide sequence ID" value="NM_030744.3"/>
</dbReference>
<dbReference type="RefSeq" id="XP_006522761.1">
    <property type="nucleotide sequence ID" value="XM_006522698.3"/>
</dbReference>
<dbReference type="SMR" id="Q9ESG2"/>
<dbReference type="CORUM" id="Q9ESG2"/>
<dbReference type="FunCoup" id="Q9ESG2">
    <property type="interactions" value="14"/>
</dbReference>
<dbReference type="IntAct" id="Q9ESG2">
    <property type="interactions" value="3"/>
</dbReference>
<dbReference type="MINT" id="Q9ESG2"/>
<dbReference type="STRING" id="10090.ENSMUSP00000023530"/>
<dbReference type="iPTMnet" id="Q9ESG2"/>
<dbReference type="PhosphoSitePlus" id="Q9ESG2"/>
<dbReference type="SwissPalm" id="Q9ESG2"/>
<dbReference type="PaxDb" id="10090-ENSMUSP00000023530"/>
<dbReference type="ProteomicsDB" id="262698"/>
<dbReference type="DNASU" id="76378"/>
<dbReference type="Ensembl" id="ENSMUST00000023530.5">
    <property type="protein sequence ID" value="ENSMUSP00000023530.5"/>
    <property type="gene ID" value="ENSMUSG00000022832.12"/>
</dbReference>
<dbReference type="GeneID" id="76378"/>
<dbReference type="KEGG" id="mmu:76378"/>
<dbReference type="UCSC" id="uc007zaz.1">
    <property type="organism name" value="mouse"/>
</dbReference>
<dbReference type="AGR" id="MGI:1923628"/>
<dbReference type="CTD" id="54763"/>
<dbReference type="MGI" id="MGI:1923628">
    <property type="gene designation" value="Ropn1"/>
</dbReference>
<dbReference type="VEuPathDB" id="HostDB:ENSMUSG00000022832"/>
<dbReference type="eggNOG" id="ENOG502R2JI">
    <property type="taxonomic scope" value="Eukaryota"/>
</dbReference>
<dbReference type="GeneTree" id="ENSGT00390000012731"/>
<dbReference type="HOGENOM" id="CLU_069829_1_0_1"/>
<dbReference type="InParanoid" id="Q9ESG2"/>
<dbReference type="OMA" id="QWASDYF"/>
<dbReference type="OrthoDB" id="10067602at2759"/>
<dbReference type="PhylomeDB" id="Q9ESG2"/>
<dbReference type="TreeFam" id="TF105421"/>
<dbReference type="BioGRID-ORCS" id="76378">
    <property type="hits" value="1 hit in 77 CRISPR screens"/>
</dbReference>
<dbReference type="ChiTaRS" id="Ropn1">
    <property type="organism name" value="mouse"/>
</dbReference>
<dbReference type="PRO" id="PR:Q9ESG2"/>
<dbReference type="Proteomes" id="UP000000589">
    <property type="component" value="Chromosome 16"/>
</dbReference>
<dbReference type="RNAct" id="Q9ESG2">
    <property type="molecule type" value="protein"/>
</dbReference>
<dbReference type="Bgee" id="ENSMUSG00000022832">
    <property type="expression patterns" value="Expressed in spermatid and 13 other cell types or tissues"/>
</dbReference>
<dbReference type="ExpressionAtlas" id="Q9ESG2">
    <property type="expression patterns" value="baseline and differential"/>
</dbReference>
<dbReference type="GO" id="GO:0005737">
    <property type="term" value="C:cytoplasm"/>
    <property type="evidence" value="ECO:0000314"/>
    <property type="project" value="MGI"/>
</dbReference>
<dbReference type="GO" id="GO:0005829">
    <property type="term" value="C:cytosol"/>
    <property type="evidence" value="ECO:0000304"/>
    <property type="project" value="Reactome"/>
</dbReference>
<dbReference type="GO" id="GO:0097598">
    <property type="term" value="C:sperm cytoplasmic droplet"/>
    <property type="evidence" value="ECO:0000314"/>
    <property type="project" value="MGI"/>
</dbReference>
<dbReference type="GO" id="GO:0097228">
    <property type="term" value="C:sperm principal piece"/>
    <property type="evidence" value="ECO:0000314"/>
    <property type="project" value="MGI"/>
</dbReference>
<dbReference type="GO" id="GO:0044782">
    <property type="term" value="P:cilium organization"/>
    <property type="evidence" value="ECO:0000316"/>
    <property type="project" value="MGI"/>
</dbReference>
<dbReference type="GO" id="GO:0030317">
    <property type="term" value="P:flagellated sperm motility"/>
    <property type="evidence" value="ECO:0000315"/>
    <property type="project" value="MGI"/>
</dbReference>
<dbReference type="GO" id="GO:0061512">
    <property type="term" value="P:protein localization to cilium"/>
    <property type="evidence" value="ECO:0000316"/>
    <property type="project" value="MGI"/>
</dbReference>
<dbReference type="GO" id="GO:0048240">
    <property type="term" value="P:sperm capacitation"/>
    <property type="evidence" value="ECO:0000315"/>
    <property type="project" value="MGI"/>
</dbReference>
<dbReference type="CDD" id="cd23019">
    <property type="entry name" value="DD_ROP"/>
    <property type="match status" value="1"/>
</dbReference>
<dbReference type="FunFam" id="1.20.890.10:FF:000004">
    <property type="entry name" value="ropporin-1-like protein isoform X2"/>
    <property type="match status" value="1"/>
</dbReference>
<dbReference type="Gene3D" id="1.20.890.10">
    <property type="entry name" value="cAMP-dependent protein kinase regulatory subunit, dimerization-anchoring domain"/>
    <property type="match status" value="1"/>
</dbReference>
<dbReference type="InterPro" id="IPR047844">
    <property type="entry name" value="ROP_DD"/>
</dbReference>
<dbReference type="PANTHER" id="PTHR14952">
    <property type="entry name" value="ROPPORIN-1-LIKE PROTEIN"/>
    <property type="match status" value="1"/>
</dbReference>
<dbReference type="PANTHER" id="PTHR14952:SF12">
    <property type="entry name" value="ROPPORIN-1B"/>
    <property type="match status" value="1"/>
</dbReference>
<dbReference type="SUPFAM" id="SSF47391">
    <property type="entry name" value="Dimerization-anchoring domain of cAMP-dependent PK regulatory subunit"/>
    <property type="match status" value="1"/>
</dbReference>
<organism>
    <name type="scientific">Mus musculus</name>
    <name type="common">Mouse</name>
    <dbReference type="NCBI Taxonomy" id="10090"/>
    <lineage>
        <taxon>Eukaryota</taxon>
        <taxon>Metazoa</taxon>
        <taxon>Chordata</taxon>
        <taxon>Craniata</taxon>
        <taxon>Vertebrata</taxon>
        <taxon>Euteleostomi</taxon>
        <taxon>Mammalia</taxon>
        <taxon>Eutheria</taxon>
        <taxon>Euarchontoglires</taxon>
        <taxon>Glires</taxon>
        <taxon>Rodentia</taxon>
        <taxon>Myomorpha</taxon>
        <taxon>Muroidea</taxon>
        <taxon>Muridae</taxon>
        <taxon>Murinae</taxon>
        <taxon>Mus</taxon>
        <taxon>Mus</taxon>
    </lineage>
</organism>
<gene>
    <name type="primary">Ropn1</name>
</gene>
<name>ROP1_MOUSE</name>
<sequence>MPQTDKQVCIPPELPELLKQFTKDAIRTQPPDLIQWAAEYFGAMSRGEIPPVRERSEQIPLSNWAELTPELLKVLHSRVAGRLIIHADELAQMWKVLNLPTDLFNSVMNVGRFTEEIEWLKFLALACSSLGVTIAKTLKIVCEVLSSDHDGGPPRIPFSTFQFLYTYIAEVDGEISSSHVSRMLNYIEQEVIGPDGLIKVNDFTQNPRVRLE</sequence>
<proteinExistence type="evidence at protein level"/>
<protein>
    <recommendedName>
        <fullName>Ropporin-1</fullName>
    </recommendedName>
    <alternativeName>
        <fullName>Rhophilin-associated 'oppo' protein</fullName>
    </alternativeName>
    <alternativeName>
        <fullName>Rhophilin-associated protein 1</fullName>
    </alternativeName>
</protein>